<sequence>MDFSKFLADDFDVKDWINAAFRAGPKDGAAGKADGHAATLVMKLQLFIQEVNHAVEETSLQALQNMPKVLRDVEALKQEASFLKEQMILVKEDIKKFEQDTSQSMQVLVEIDQVKSRMQLAAESLQEADKWSTLSADIEETFKTQDIAVISAKLTGMQNSLMMLVDTPDYSEKCVHLEALKNRLEALASPQIVAAFTSQSVDQSKVFVKVFTEIDRMPQLLAYYYKCHKVQLLATWQELCQSDLPLDRQLTGLYDALLGAWHTQTQWATQVFKNPHEVVTVLLIQTLGALVPSLPMCLSAAVERAGPELELTRLLEFYDTTAHFAKGLEMALLPHLQDHNLVKVVELVDAVYGPYKPFQLKYGDMEENNLLIQISAVPLEHGEVIDCVQELSHSVHKLFGLASAAVDRCAKFTNGLGTCGLLTALKSLFAKYVSHFTNALQSIRKKCKLDDIPPNSLFQEDWTAFQNSVRIIATCGELLRQCGDFEQQLANRILSTAGKYLSDSYSPRSLAGFQDSILTDKKSPAKNPWQEYNYLQKDNPAEYASLMEILYTLKEKGSSNHNLLSASRTALTRLNQQAHQLAFDSVFLRIKQQLLLVSRMDSWNTAGIGETLTDDLPAFSLTPLEYISNIGQYIMSLPLNLEPFVTQEDSALELALHAGKLPFPPEQGDELPELDNMADNWLGSIARATMQTYCDVILQIPEVTPHSTKQLATDIDYLINVMDALGLQPSRTLQNIAALLKAKPEEYRQVSKGLPRRLAATVATMRGVNY</sequence>
<name>COG7_MOUSE</name>
<organism>
    <name type="scientific">Mus musculus</name>
    <name type="common">Mouse</name>
    <dbReference type="NCBI Taxonomy" id="10090"/>
    <lineage>
        <taxon>Eukaryota</taxon>
        <taxon>Metazoa</taxon>
        <taxon>Chordata</taxon>
        <taxon>Craniata</taxon>
        <taxon>Vertebrata</taxon>
        <taxon>Euteleostomi</taxon>
        <taxon>Mammalia</taxon>
        <taxon>Eutheria</taxon>
        <taxon>Euarchontoglires</taxon>
        <taxon>Glires</taxon>
        <taxon>Rodentia</taxon>
        <taxon>Myomorpha</taxon>
        <taxon>Muroidea</taxon>
        <taxon>Muridae</taxon>
        <taxon>Murinae</taxon>
        <taxon>Mus</taxon>
        <taxon>Mus</taxon>
    </lineage>
</organism>
<keyword id="KW-0333">Golgi apparatus</keyword>
<keyword id="KW-0472">Membrane</keyword>
<keyword id="KW-0653">Protein transport</keyword>
<keyword id="KW-1185">Reference proteome</keyword>
<keyword id="KW-0813">Transport</keyword>
<protein>
    <recommendedName>
        <fullName>Conserved oligomeric Golgi complex subunit 7</fullName>
        <shortName>COG complex subunit 7</shortName>
    </recommendedName>
    <alternativeName>
        <fullName>Component of oligomeric Golgi complex 7</fullName>
    </alternativeName>
</protein>
<feature type="chain" id="PRO_0000320147" description="Conserved oligomeric Golgi complex subunit 7">
    <location>
        <begin position="1"/>
        <end position="770"/>
    </location>
</feature>
<feature type="sequence conflict" description="In Ref. 1; BAE32768." evidence="2" ref="1">
    <original>A</original>
    <variation>S</variation>
    <location>
        <position position="195"/>
    </location>
</feature>
<feature type="sequence conflict" description="In Ref. 1; BAE32768." evidence="2" ref="1">
    <original>A</original>
    <variation>G</variation>
    <location>
        <position position="301"/>
    </location>
</feature>
<comment type="function">
    <text evidence="1">Required for normal Golgi function.</text>
</comment>
<comment type="subunit">
    <text evidence="1">Component of the conserved oligomeric Golgi complex which is composed of eight different subunits and is required for normal Golgi morphology and localization.</text>
</comment>
<comment type="subcellular location">
    <subcellularLocation>
        <location evidence="1">Golgi apparatus membrane</location>
        <topology evidence="1">Peripheral membrane protein</topology>
    </subcellularLocation>
</comment>
<comment type="similarity">
    <text evidence="2">Belongs to the COG7 family.</text>
</comment>
<evidence type="ECO:0000250" key="1">
    <source>
        <dbReference type="UniProtKB" id="P83436"/>
    </source>
</evidence>
<evidence type="ECO:0000305" key="2"/>
<dbReference type="EMBL" id="AK145163">
    <property type="protein sequence ID" value="BAE26269.1"/>
    <property type="molecule type" value="mRNA"/>
</dbReference>
<dbReference type="EMBL" id="AK154693">
    <property type="protein sequence ID" value="BAE32768.1"/>
    <property type="molecule type" value="mRNA"/>
</dbReference>
<dbReference type="CCDS" id="CCDS21805.1"/>
<dbReference type="RefSeq" id="NP_001028490.2">
    <property type="nucleotide sequence ID" value="NM_001033318.3"/>
</dbReference>
<dbReference type="BioGRID" id="231453">
    <property type="interactions" value="3"/>
</dbReference>
<dbReference type="FunCoup" id="Q3UM29">
    <property type="interactions" value="1869"/>
</dbReference>
<dbReference type="STRING" id="10090.ENSMUSP00000058990"/>
<dbReference type="iPTMnet" id="Q3UM29"/>
<dbReference type="PhosphoSitePlus" id="Q3UM29"/>
<dbReference type="jPOST" id="Q3UM29"/>
<dbReference type="PaxDb" id="10090-ENSMUSP00000058990"/>
<dbReference type="PeptideAtlas" id="Q3UM29"/>
<dbReference type="ProteomicsDB" id="283420"/>
<dbReference type="Pumba" id="Q3UM29"/>
<dbReference type="DNASU" id="233824"/>
<dbReference type="GeneID" id="233824"/>
<dbReference type="KEGG" id="mmu:233824"/>
<dbReference type="UCSC" id="uc009jnz.1">
    <property type="organism name" value="mouse"/>
</dbReference>
<dbReference type="AGR" id="MGI:2685013"/>
<dbReference type="CTD" id="91949"/>
<dbReference type="MGI" id="MGI:2685013">
    <property type="gene designation" value="Cog7"/>
</dbReference>
<dbReference type="eggNOG" id="KOG4182">
    <property type="taxonomic scope" value="Eukaryota"/>
</dbReference>
<dbReference type="InParanoid" id="Q3UM29"/>
<dbReference type="PhylomeDB" id="Q3UM29"/>
<dbReference type="TreeFam" id="TF324498"/>
<dbReference type="Reactome" id="R-MMU-6807878">
    <property type="pathway name" value="COPI-mediated anterograde transport"/>
</dbReference>
<dbReference type="Reactome" id="R-MMU-6811438">
    <property type="pathway name" value="Intra-Golgi traffic"/>
</dbReference>
<dbReference type="Reactome" id="R-MMU-6811440">
    <property type="pathway name" value="Retrograde transport at the Trans-Golgi-Network"/>
</dbReference>
<dbReference type="BioGRID-ORCS" id="233824">
    <property type="hits" value="27 hits in 78 CRISPR screens"/>
</dbReference>
<dbReference type="PRO" id="PR:Q3UM29"/>
<dbReference type="Proteomes" id="UP000000589">
    <property type="component" value="Unplaced"/>
</dbReference>
<dbReference type="RNAct" id="Q3UM29">
    <property type="molecule type" value="protein"/>
</dbReference>
<dbReference type="GO" id="GO:0005794">
    <property type="term" value="C:Golgi apparatus"/>
    <property type="evidence" value="ECO:0000266"/>
    <property type="project" value="MGI"/>
</dbReference>
<dbReference type="GO" id="GO:0000139">
    <property type="term" value="C:Golgi membrane"/>
    <property type="evidence" value="ECO:0007669"/>
    <property type="project" value="UniProtKB-SubCell"/>
</dbReference>
<dbReference type="GO" id="GO:0017119">
    <property type="term" value="C:Golgi transport complex"/>
    <property type="evidence" value="ECO:0007669"/>
    <property type="project" value="InterPro"/>
</dbReference>
<dbReference type="GO" id="GO:0006886">
    <property type="term" value="P:intracellular protein transport"/>
    <property type="evidence" value="ECO:0007669"/>
    <property type="project" value="InterPro"/>
</dbReference>
<dbReference type="InterPro" id="IPR019335">
    <property type="entry name" value="COG7"/>
</dbReference>
<dbReference type="PANTHER" id="PTHR21443">
    <property type="entry name" value="CONSERVED OLIGOMERIC GOLGI COMPLEX COMPONENT 7"/>
    <property type="match status" value="1"/>
</dbReference>
<dbReference type="PANTHER" id="PTHR21443:SF0">
    <property type="entry name" value="CONSERVED OLIGOMERIC GOLGI COMPLEX SUBUNIT 7"/>
    <property type="match status" value="1"/>
</dbReference>
<dbReference type="Pfam" id="PF10191">
    <property type="entry name" value="COG7"/>
    <property type="match status" value="1"/>
</dbReference>
<gene>
    <name type="primary">Cog7</name>
</gene>
<reference key="1">
    <citation type="journal article" date="2005" name="Science">
        <title>The transcriptional landscape of the mammalian genome.</title>
        <authorList>
            <person name="Carninci P."/>
            <person name="Kasukawa T."/>
            <person name="Katayama S."/>
            <person name="Gough J."/>
            <person name="Frith M.C."/>
            <person name="Maeda N."/>
            <person name="Oyama R."/>
            <person name="Ravasi T."/>
            <person name="Lenhard B."/>
            <person name="Wells C."/>
            <person name="Kodzius R."/>
            <person name="Shimokawa K."/>
            <person name="Bajic V.B."/>
            <person name="Brenner S.E."/>
            <person name="Batalov S."/>
            <person name="Forrest A.R."/>
            <person name="Zavolan M."/>
            <person name="Davis M.J."/>
            <person name="Wilming L.G."/>
            <person name="Aidinis V."/>
            <person name="Allen J.E."/>
            <person name="Ambesi-Impiombato A."/>
            <person name="Apweiler R."/>
            <person name="Aturaliya R.N."/>
            <person name="Bailey T.L."/>
            <person name="Bansal M."/>
            <person name="Baxter L."/>
            <person name="Beisel K.W."/>
            <person name="Bersano T."/>
            <person name="Bono H."/>
            <person name="Chalk A.M."/>
            <person name="Chiu K.P."/>
            <person name="Choudhary V."/>
            <person name="Christoffels A."/>
            <person name="Clutterbuck D.R."/>
            <person name="Crowe M.L."/>
            <person name="Dalla E."/>
            <person name="Dalrymple B.P."/>
            <person name="de Bono B."/>
            <person name="Della Gatta G."/>
            <person name="di Bernardo D."/>
            <person name="Down T."/>
            <person name="Engstrom P."/>
            <person name="Fagiolini M."/>
            <person name="Faulkner G."/>
            <person name="Fletcher C.F."/>
            <person name="Fukushima T."/>
            <person name="Furuno M."/>
            <person name="Futaki S."/>
            <person name="Gariboldi M."/>
            <person name="Georgii-Hemming P."/>
            <person name="Gingeras T.R."/>
            <person name="Gojobori T."/>
            <person name="Green R.E."/>
            <person name="Gustincich S."/>
            <person name="Harbers M."/>
            <person name="Hayashi Y."/>
            <person name="Hensch T.K."/>
            <person name="Hirokawa N."/>
            <person name="Hill D."/>
            <person name="Huminiecki L."/>
            <person name="Iacono M."/>
            <person name="Ikeo K."/>
            <person name="Iwama A."/>
            <person name="Ishikawa T."/>
            <person name="Jakt M."/>
            <person name="Kanapin A."/>
            <person name="Katoh M."/>
            <person name="Kawasawa Y."/>
            <person name="Kelso J."/>
            <person name="Kitamura H."/>
            <person name="Kitano H."/>
            <person name="Kollias G."/>
            <person name="Krishnan S.P."/>
            <person name="Kruger A."/>
            <person name="Kummerfeld S.K."/>
            <person name="Kurochkin I.V."/>
            <person name="Lareau L.F."/>
            <person name="Lazarevic D."/>
            <person name="Lipovich L."/>
            <person name="Liu J."/>
            <person name="Liuni S."/>
            <person name="McWilliam S."/>
            <person name="Madan Babu M."/>
            <person name="Madera M."/>
            <person name="Marchionni L."/>
            <person name="Matsuda H."/>
            <person name="Matsuzawa S."/>
            <person name="Miki H."/>
            <person name="Mignone F."/>
            <person name="Miyake S."/>
            <person name="Morris K."/>
            <person name="Mottagui-Tabar S."/>
            <person name="Mulder N."/>
            <person name="Nakano N."/>
            <person name="Nakauchi H."/>
            <person name="Ng P."/>
            <person name="Nilsson R."/>
            <person name="Nishiguchi S."/>
            <person name="Nishikawa S."/>
            <person name="Nori F."/>
            <person name="Ohara O."/>
            <person name="Okazaki Y."/>
            <person name="Orlando V."/>
            <person name="Pang K.C."/>
            <person name="Pavan W.J."/>
            <person name="Pavesi G."/>
            <person name="Pesole G."/>
            <person name="Petrovsky N."/>
            <person name="Piazza S."/>
            <person name="Reed J."/>
            <person name="Reid J.F."/>
            <person name="Ring B.Z."/>
            <person name="Ringwald M."/>
            <person name="Rost B."/>
            <person name="Ruan Y."/>
            <person name="Salzberg S.L."/>
            <person name="Sandelin A."/>
            <person name="Schneider C."/>
            <person name="Schoenbach C."/>
            <person name="Sekiguchi K."/>
            <person name="Semple C.A."/>
            <person name="Seno S."/>
            <person name="Sessa L."/>
            <person name="Sheng Y."/>
            <person name="Shibata Y."/>
            <person name="Shimada H."/>
            <person name="Shimada K."/>
            <person name="Silva D."/>
            <person name="Sinclair B."/>
            <person name="Sperling S."/>
            <person name="Stupka E."/>
            <person name="Sugiura K."/>
            <person name="Sultana R."/>
            <person name="Takenaka Y."/>
            <person name="Taki K."/>
            <person name="Tammoja K."/>
            <person name="Tan S.L."/>
            <person name="Tang S."/>
            <person name="Taylor M.S."/>
            <person name="Tegner J."/>
            <person name="Teichmann S.A."/>
            <person name="Ueda H.R."/>
            <person name="van Nimwegen E."/>
            <person name="Verardo R."/>
            <person name="Wei C.L."/>
            <person name="Yagi K."/>
            <person name="Yamanishi H."/>
            <person name="Zabarovsky E."/>
            <person name="Zhu S."/>
            <person name="Zimmer A."/>
            <person name="Hide W."/>
            <person name="Bult C."/>
            <person name="Grimmond S.M."/>
            <person name="Teasdale R.D."/>
            <person name="Liu E.T."/>
            <person name="Brusic V."/>
            <person name="Quackenbush J."/>
            <person name="Wahlestedt C."/>
            <person name="Mattick J.S."/>
            <person name="Hume D.A."/>
            <person name="Kai C."/>
            <person name="Sasaki D."/>
            <person name="Tomaru Y."/>
            <person name="Fukuda S."/>
            <person name="Kanamori-Katayama M."/>
            <person name="Suzuki M."/>
            <person name="Aoki J."/>
            <person name="Arakawa T."/>
            <person name="Iida J."/>
            <person name="Imamura K."/>
            <person name="Itoh M."/>
            <person name="Kato T."/>
            <person name="Kawaji H."/>
            <person name="Kawagashira N."/>
            <person name="Kawashima T."/>
            <person name="Kojima M."/>
            <person name="Kondo S."/>
            <person name="Konno H."/>
            <person name="Nakano K."/>
            <person name="Ninomiya N."/>
            <person name="Nishio T."/>
            <person name="Okada M."/>
            <person name="Plessy C."/>
            <person name="Shibata K."/>
            <person name="Shiraki T."/>
            <person name="Suzuki S."/>
            <person name="Tagami M."/>
            <person name="Waki K."/>
            <person name="Watahiki A."/>
            <person name="Okamura-Oho Y."/>
            <person name="Suzuki H."/>
            <person name="Kawai J."/>
            <person name="Hayashizaki Y."/>
        </authorList>
    </citation>
    <scope>NUCLEOTIDE SEQUENCE [LARGE SCALE MRNA]</scope>
    <source>
        <strain>NOD</strain>
        <tissue>Mammary gland</tissue>
    </source>
</reference>
<reference key="2">
    <citation type="journal article" date="2010" name="Cell">
        <title>A tissue-specific atlas of mouse protein phosphorylation and expression.</title>
        <authorList>
            <person name="Huttlin E.L."/>
            <person name="Jedrychowski M.P."/>
            <person name="Elias J.E."/>
            <person name="Goswami T."/>
            <person name="Rad R."/>
            <person name="Beausoleil S.A."/>
            <person name="Villen J."/>
            <person name="Haas W."/>
            <person name="Sowa M.E."/>
            <person name="Gygi S.P."/>
        </authorList>
    </citation>
    <scope>IDENTIFICATION BY MASS SPECTROMETRY [LARGE SCALE ANALYSIS]</scope>
    <source>
        <tissue>Brain</tissue>
        <tissue>Kidney</tissue>
        <tissue>Lung</tissue>
        <tissue>Spleen</tissue>
        <tissue>Testis</tissue>
    </source>
</reference>
<accession>Q3UM29</accession>
<accession>Q3U3L7</accession>
<proteinExistence type="evidence at protein level"/>